<keyword id="KW-1015">Disulfide bond</keyword>
<keyword id="KW-0325">Glycoprotein</keyword>
<keyword id="KW-0945">Host-virus interaction</keyword>
<keyword id="KW-0393">Immunoglobulin domain</keyword>
<keyword id="KW-1087">Inhibition of host complement factors by virus</keyword>
<keyword id="KW-0472">Membrane</keyword>
<keyword id="KW-0732">Signal</keyword>
<keyword id="KW-0812">Transmembrane</keyword>
<keyword id="KW-1133">Transmembrane helix</keyword>
<keyword id="KW-1233">Viral attachment to host adhesion receptor</keyword>
<keyword id="KW-1161">Viral attachment to host cell</keyword>
<keyword id="KW-0899">Viral immunoevasion</keyword>
<keyword id="KW-0946">Virion</keyword>
<keyword id="KW-1160">Virus entry into host cell</keyword>
<comment type="function">
    <text evidence="4">Essential for the initial attachment to heparan sulfate moieties of the host cell surface proteoglycans. Also plays a role in host immune evasion by inhibiting the host complement cascade activation.</text>
</comment>
<comment type="subunit">
    <text evidence="4">Interacts with host complement component C3; this interaction inhibits host immune response by disregulating complement cascade.</text>
</comment>
<comment type="subcellular location">
    <subcellularLocation>
        <location evidence="5">Virion membrane</location>
        <topology evidence="5">Single-pass membrane protein</topology>
    </subcellularLocation>
</comment>
<comment type="similarity">
    <text evidence="5">Belongs to the herpesviridae glycoprotein C family.</text>
</comment>
<protein>
    <recommendedName>
        <fullName>Envelope glycoprotein C</fullName>
    </recommendedName>
    <alternativeName>
        <fullName>Glycoprotein 13</fullName>
    </alternativeName>
</protein>
<sequence length="485" mass="52509">MGLVNIMRFITFAYIICGGFILTRTSGTSASASPATPTTNTGEGTSSPVTPTYTTSTDSNNSTATNNSTDVNGTEATPTPSHPHSHENTITCTNSLISVPYYTSVTINCSTTVSVNHSEYRLEIHLNQRTPFSDTPPGDQENYVNHNATKDQTLLLFSTAHSSAKSRRVGQLGVIPDRLPKRQLFNLPAHTNGGTNFPLNIKSIDWRTAGVYVWYLFAKNGSLINSTSVTVLTYNAPLMDLSVHPSLKGENHRAVCVVASYFPHNSVKLRWYKNAKEVDFTKYVTNASSVWVDGLITRISTVSIPADPDEEYPPSLRCSIEWYRDEVSFSRMAKAGTPSVFVAPTVSVNVEDGAAVCTAECVPSNGVFVSWVVNDHLPGVPSQDVTTGVCSSHPGLVNMRSSRPLSEENGEREYNCIIEGYPDGLPMFSDSVVYDASPIVEDMPVLTGIIAVTCGAAALALVVLITAVCFYCSKPSQVPYKKADF</sequence>
<feature type="signal peptide">
    <location>
        <begin position="1"/>
        <end position="32"/>
    </location>
</feature>
<feature type="chain" id="PRO_0000038204" description="Envelope glycoprotein C">
    <location>
        <begin position="33"/>
        <end position="485"/>
    </location>
</feature>
<feature type="topological domain" description="Virion surface" evidence="1">
    <location>
        <begin position="33"/>
        <end position="444"/>
    </location>
</feature>
<feature type="transmembrane region" description="Helical">
    <location>
        <begin position="445"/>
        <end position="468"/>
    </location>
</feature>
<feature type="topological domain" description="Cytoplasmic" evidence="1">
    <location>
        <begin position="469"/>
        <end position="485"/>
    </location>
</feature>
<feature type="domain" description="Ig-like">
    <location>
        <begin position="237"/>
        <end position="330"/>
    </location>
</feature>
<feature type="region of interest" description="Disordered" evidence="3">
    <location>
        <begin position="28"/>
        <end position="88"/>
    </location>
</feature>
<feature type="compositionally biased region" description="Low complexity" evidence="3">
    <location>
        <begin position="28"/>
        <end position="72"/>
    </location>
</feature>
<feature type="glycosylation site" description="N-linked (GlcNAc...) asparagine; by host" evidence="1">
    <location>
        <position position="60"/>
    </location>
</feature>
<feature type="glycosylation site" description="N-linked (GlcNAc...) asparagine; by host" evidence="1">
    <location>
        <position position="61"/>
    </location>
</feature>
<feature type="glycosylation site" description="N-linked (GlcNAc...) asparagine; by host" evidence="1">
    <location>
        <position position="66"/>
    </location>
</feature>
<feature type="glycosylation site" description="N-linked (GlcNAc...) asparagine; by host" evidence="1">
    <location>
        <position position="67"/>
    </location>
</feature>
<feature type="glycosylation site" description="N-linked (GlcNAc...) asparagine; by host" evidence="1">
    <location>
        <position position="72"/>
    </location>
</feature>
<feature type="glycosylation site" description="N-linked (GlcNAc...) asparagine; by host" evidence="1">
    <location>
        <position position="108"/>
    </location>
</feature>
<feature type="glycosylation site" description="N-linked (GlcNAc...) asparagine; by host" evidence="1">
    <location>
        <position position="116"/>
    </location>
</feature>
<feature type="glycosylation site" description="N-linked (GlcNAc...) asparagine; by host" evidence="1">
    <location>
        <position position="147"/>
    </location>
</feature>
<feature type="glycosylation site" description="N-linked (GlcNAc...) asparagine; by host" evidence="1">
    <location>
        <position position="220"/>
    </location>
</feature>
<feature type="glycosylation site" description="N-linked (GlcNAc...) asparagine; by host" evidence="1">
    <location>
        <position position="225"/>
    </location>
</feature>
<feature type="glycosylation site" description="N-linked (GlcNAc...) asparagine; by host" evidence="1">
    <location>
        <position position="286"/>
    </location>
</feature>
<feature type="disulfide bond" evidence="2">
    <location>
        <begin position="92"/>
        <end position="109"/>
    </location>
</feature>
<feature type="disulfide bond" evidence="2">
    <location>
        <begin position="256"/>
        <end position="318"/>
    </location>
</feature>
<feature type="disulfide bond" evidence="2">
    <location>
        <begin position="357"/>
        <end position="416"/>
    </location>
</feature>
<feature type="disulfide bond" evidence="2">
    <location>
        <begin position="361"/>
        <end position="390"/>
    </location>
</feature>
<proteinExistence type="evidence at protein level"/>
<dbReference type="EMBL" id="M58031">
    <property type="protein sequence ID" value="AAA46083.1"/>
    <property type="molecule type" value="Genomic_DNA"/>
</dbReference>
<dbReference type="PIR" id="B45343">
    <property type="entry name" value="B45343"/>
</dbReference>
<dbReference type="GlyCosmos" id="P22596">
    <property type="glycosylation" value="11 sites, No reported glycans"/>
</dbReference>
<dbReference type="GO" id="GO:0016020">
    <property type="term" value="C:membrane"/>
    <property type="evidence" value="ECO:0007669"/>
    <property type="project" value="UniProtKB-KW"/>
</dbReference>
<dbReference type="GO" id="GO:0055036">
    <property type="term" value="C:virion membrane"/>
    <property type="evidence" value="ECO:0007669"/>
    <property type="project" value="UniProtKB-SubCell"/>
</dbReference>
<dbReference type="GO" id="GO:0098671">
    <property type="term" value="P:adhesion receptor-mediated virion attachment to host cell"/>
    <property type="evidence" value="ECO:0007669"/>
    <property type="project" value="UniProtKB-KW"/>
</dbReference>
<dbReference type="GO" id="GO:0046718">
    <property type="term" value="P:symbiont entry into host cell"/>
    <property type="evidence" value="ECO:0007669"/>
    <property type="project" value="UniProtKB-KW"/>
</dbReference>
<dbReference type="GO" id="GO:0042784">
    <property type="term" value="P:symbiont-mediated suppression of host complement activation"/>
    <property type="evidence" value="ECO:0007669"/>
    <property type="project" value="UniProtKB-KW"/>
</dbReference>
<dbReference type="InterPro" id="IPR001038">
    <property type="entry name" value="GA_GC"/>
</dbReference>
<dbReference type="InterPro" id="IPR007110">
    <property type="entry name" value="Ig-like_dom"/>
</dbReference>
<dbReference type="InterPro" id="IPR036179">
    <property type="entry name" value="Ig-like_dom_sf"/>
</dbReference>
<dbReference type="Pfam" id="PF02124">
    <property type="entry name" value="Marek_A"/>
    <property type="match status" value="1"/>
</dbReference>
<dbReference type="PRINTS" id="PR00668">
    <property type="entry name" value="GLYCPROTEINC"/>
</dbReference>
<dbReference type="SUPFAM" id="SSF48726">
    <property type="entry name" value="Immunoglobulin"/>
    <property type="match status" value="1"/>
</dbReference>
<dbReference type="PROSITE" id="PS50835">
    <property type="entry name" value="IG_LIKE"/>
    <property type="match status" value="1"/>
</dbReference>
<gene>
    <name type="primary">gC</name>
    <name type="synonym">GP13</name>
</gene>
<evidence type="ECO:0000255" key="1"/>
<evidence type="ECO:0000255" key="2">
    <source>
        <dbReference type="PROSITE-ProRule" id="PRU00114"/>
    </source>
</evidence>
<evidence type="ECO:0000256" key="3">
    <source>
        <dbReference type="SAM" id="MobiDB-lite"/>
    </source>
</evidence>
<evidence type="ECO:0000269" key="4">
    <source>
    </source>
</evidence>
<evidence type="ECO:0000305" key="5"/>
<organism>
    <name type="scientific">Equine herpesvirus 4 (strain 1942)</name>
    <name type="common">EHV-4</name>
    <name type="synonym">Equine rhinopneumonitis virus</name>
    <dbReference type="NCBI Taxonomy" id="10333"/>
    <lineage>
        <taxon>Viruses</taxon>
        <taxon>Duplodnaviria</taxon>
        <taxon>Heunggongvirae</taxon>
        <taxon>Peploviricota</taxon>
        <taxon>Herviviricetes</taxon>
        <taxon>Herpesvirales</taxon>
        <taxon>Orthoherpesviridae</taxon>
        <taxon>Alphaherpesvirinae</taxon>
        <taxon>Varicellovirus</taxon>
        <taxon>Varicellovirus equidalpha4</taxon>
        <taxon>Equid alphaherpesvirus 4</taxon>
    </lineage>
</organism>
<accession>P22596</accession>
<reference key="1">
    <citation type="journal article" date="1990" name="Virology">
        <title>The nucleotide sequence of the equine herpesvirus 4 gC gene homologue.</title>
        <authorList>
            <person name="Nicolson L."/>
            <person name="Onions D.E."/>
        </authorList>
    </citation>
    <scope>NUCLEOTIDE SEQUENCE [GENOMIC DNA]</scope>
</reference>
<reference key="2">
    <citation type="journal article" date="2010" name="Virus Res.">
        <title>Glycoprotein C of equine herpesvirus 4 plays a role in viral binding to cell surface heparan sulfate.</title>
        <authorList>
            <person name="Azab W."/>
            <person name="Tsujimura K."/>
            <person name="Maeda K."/>
            <person name="Kobayashi K."/>
            <person name="Mohamed Y.M."/>
            <person name="Kato K."/>
            <person name="Matsumura T."/>
            <person name="Akashi H."/>
        </authorList>
    </citation>
    <scope>FUNCTION</scope>
    <scope>INTERACTION WITH HOST C3</scope>
</reference>
<name>GC_EHV4</name>
<organismHost>
    <name type="scientific">Equus caballus</name>
    <name type="common">Horse</name>
    <dbReference type="NCBI Taxonomy" id="9796"/>
</organismHost>